<comment type="function">
    <text evidence="2">Metalloaminopeptidase that catalyzes the removal of a penultimate prolyl residue from the N-termini of peptides, such as Arg-Pro-Pro. Contributes to the degradation of bradykinin.</text>
</comment>
<comment type="catalytic activity">
    <reaction evidence="2">
        <text>Release of any N-terminal amino acid, including proline, that is linked to proline, even from a dipeptide or tripeptide.</text>
        <dbReference type="EC" id="3.4.11.9"/>
    </reaction>
</comment>
<comment type="cofactor">
    <cofactor evidence="2">
        <name>Mn(2+)</name>
        <dbReference type="ChEBI" id="CHEBI:29035"/>
    </cofactor>
    <text evidence="2">Binds 2 manganese ions per subunit.</text>
</comment>
<comment type="subunit">
    <text evidence="2">Homodimer.</text>
</comment>
<comment type="subcellular location">
    <subcellularLocation>
        <location evidence="2">Cytoplasm</location>
        <location evidence="2">Cytosol</location>
    </subcellularLocation>
</comment>
<comment type="similarity">
    <text evidence="3">Belongs to the peptidase M24B family.</text>
</comment>
<dbReference type="EC" id="3.4.11.9" evidence="2"/>
<dbReference type="EMBL" id="BT025361">
    <property type="protein sequence ID" value="ABF57317.1"/>
    <property type="molecule type" value="mRNA"/>
</dbReference>
<dbReference type="EMBL" id="BC133601">
    <property type="protein sequence ID" value="AAI33602.1"/>
    <property type="molecule type" value="mRNA"/>
</dbReference>
<dbReference type="RefSeq" id="NP_001069070.1">
    <property type="nucleotide sequence ID" value="NM_001075602.1"/>
</dbReference>
<dbReference type="RefSeq" id="XP_005225789.1">
    <property type="nucleotide sequence ID" value="XM_005225732.5"/>
</dbReference>
<dbReference type="RefSeq" id="XP_005225790.1">
    <property type="nucleotide sequence ID" value="XM_005225733.5"/>
</dbReference>
<dbReference type="RefSeq" id="XP_005225791.1">
    <property type="nucleotide sequence ID" value="XM_005225734.3"/>
</dbReference>
<dbReference type="RefSeq" id="XP_010818332.1">
    <property type="nucleotide sequence ID" value="XM_010820030.4"/>
</dbReference>
<dbReference type="RefSeq" id="XP_015316219.1">
    <property type="nucleotide sequence ID" value="XM_015460733.3"/>
</dbReference>
<dbReference type="SMR" id="Q1JPJ2"/>
<dbReference type="FunCoup" id="Q1JPJ2">
    <property type="interactions" value="2900"/>
</dbReference>
<dbReference type="STRING" id="9913.ENSBTAP00000052124"/>
<dbReference type="MEROPS" id="M24.009"/>
<dbReference type="PaxDb" id="9913-ENSBTAP00000052124"/>
<dbReference type="PeptideAtlas" id="Q1JPJ2"/>
<dbReference type="GeneID" id="513156"/>
<dbReference type="KEGG" id="bta:513156"/>
<dbReference type="CTD" id="7511"/>
<dbReference type="eggNOG" id="KOG2413">
    <property type="taxonomic scope" value="Eukaryota"/>
</dbReference>
<dbReference type="HOGENOM" id="CLU_011781_2_2_1"/>
<dbReference type="InParanoid" id="Q1JPJ2"/>
<dbReference type="OrthoDB" id="9995434at2759"/>
<dbReference type="TreeFam" id="TF314183"/>
<dbReference type="Proteomes" id="UP000009136">
    <property type="component" value="Unplaced"/>
</dbReference>
<dbReference type="GO" id="GO:0005829">
    <property type="term" value="C:cytosol"/>
    <property type="evidence" value="ECO:0007669"/>
    <property type="project" value="UniProtKB-SubCell"/>
</dbReference>
<dbReference type="GO" id="GO:0030145">
    <property type="term" value="F:manganese ion binding"/>
    <property type="evidence" value="ECO:0000250"/>
    <property type="project" value="UniProtKB"/>
</dbReference>
<dbReference type="GO" id="GO:0070006">
    <property type="term" value="F:metalloaminopeptidase activity"/>
    <property type="evidence" value="ECO:0000250"/>
    <property type="project" value="UniProtKB"/>
</dbReference>
<dbReference type="GO" id="GO:0010815">
    <property type="term" value="P:bradykinin catabolic process"/>
    <property type="evidence" value="ECO:0000250"/>
    <property type="project" value="UniProtKB"/>
</dbReference>
<dbReference type="GO" id="GO:0043069">
    <property type="term" value="P:negative regulation of programmed cell death"/>
    <property type="evidence" value="ECO:0000250"/>
    <property type="project" value="UniProtKB"/>
</dbReference>
<dbReference type="GO" id="GO:0006508">
    <property type="term" value="P:proteolysis"/>
    <property type="evidence" value="ECO:0007669"/>
    <property type="project" value="UniProtKB-KW"/>
</dbReference>
<dbReference type="CDD" id="cd01085">
    <property type="entry name" value="APP"/>
    <property type="match status" value="1"/>
</dbReference>
<dbReference type="FunFam" id="3.40.350.10:FF:000001">
    <property type="entry name" value="Putative xaa-Pro aminopeptidase 1"/>
    <property type="match status" value="1"/>
</dbReference>
<dbReference type="FunFam" id="3.40.350.10:FF:000004">
    <property type="entry name" value="xaa-Pro aminopeptidase 1 isoform X1"/>
    <property type="match status" value="1"/>
</dbReference>
<dbReference type="FunFam" id="3.90.230.10:FF:000004">
    <property type="entry name" value="xaa-Pro aminopeptidase 1 isoform X1"/>
    <property type="match status" value="1"/>
</dbReference>
<dbReference type="Gene3D" id="3.90.230.10">
    <property type="entry name" value="Creatinase/methionine aminopeptidase superfamily"/>
    <property type="match status" value="1"/>
</dbReference>
<dbReference type="Gene3D" id="3.40.350.10">
    <property type="entry name" value="Creatinase/prolidase N-terminal domain"/>
    <property type="match status" value="2"/>
</dbReference>
<dbReference type="InterPro" id="IPR029149">
    <property type="entry name" value="Creatin/AminoP/Spt16_N"/>
</dbReference>
<dbReference type="InterPro" id="IPR036005">
    <property type="entry name" value="Creatinase/aminopeptidase-like"/>
</dbReference>
<dbReference type="InterPro" id="IPR000587">
    <property type="entry name" value="Creatinase_N"/>
</dbReference>
<dbReference type="InterPro" id="IPR000994">
    <property type="entry name" value="Pept_M24"/>
</dbReference>
<dbReference type="InterPro" id="IPR033740">
    <property type="entry name" value="Pept_M24B"/>
</dbReference>
<dbReference type="InterPro" id="IPR032416">
    <property type="entry name" value="Peptidase_M24_C"/>
</dbReference>
<dbReference type="InterPro" id="IPR001131">
    <property type="entry name" value="Peptidase_M24B_aminopep-P_CS"/>
</dbReference>
<dbReference type="InterPro" id="IPR050422">
    <property type="entry name" value="X-Pro_aminopeptidase_P"/>
</dbReference>
<dbReference type="PANTHER" id="PTHR43763">
    <property type="entry name" value="XAA-PRO AMINOPEPTIDASE 1"/>
    <property type="match status" value="1"/>
</dbReference>
<dbReference type="PANTHER" id="PTHR43763:SF6">
    <property type="entry name" value="XAA-PRO AMINOPEPTIDASE 1"/>
    <property type="match status" value="1"/>
</dbReference>
<dbReference type="Pfam" id="PF01321">
    <property type="entry name" value="Creatinase_N"/>
    <property type="match status" value="1"/>
</dbReference>
<dbReference type="Pfam" id="PF16189">
    <property type="entry name" value="Creatinase_N_2"/>
    <property type="match status" value="1"/>
</dbReference>
<dbReference type="Pfam" id="PF00557">
    <property type="entry name" value="Peptidase_M24"/>
    <property type="match status" value="1"/>
</dbReference>
<dbReference type="Pfam" id="PF16188">
    <property type="entry name" value="Peptidase_M24_C"/>
    <property type="match status" value="1"/>
</dbReference>
<dbReference type="SUPFAM" id="SSF55920">
    <property type="entry name" value="Creatinase/aminopeptidase"/>
    <property type="match status" value="1"/>
</dbReference>
<dbReference type="SUPFAM" id="SSF53092">
    <property type="entry name" value="Creatinase/prolidase N-terminal domain"/>
    <property type="match status" value="1"/>
</dbReference>
<dbReference type="PROSITE" id="PS00491">
    <property type="entry name" value="PROLINE_PEPTIDASE"/>
    <property type="match status" value="1"/>
</dbReference>
<name>XPP1_BOVIN</name>
<keyword id="KW-0007">Acetylation</keyword>
<keyword id="KW-0031">Aminopeptidase</keyword>
<keyword id="KW-0963">Cytoplasm</keyword>
<keyword id="KW-0378">Hydrolase</keyword>
<keyword id="KW-0464">Manganese</keyword>
<keyword id="KW-0479">Metal-binding</keyword>
<keyword id="KW-0482">Metalloprotease</keyword>
<keyword id="KW-0645">Protease</keyword>
<keyword id="KW-1185">Reference proteome</keyword>
<feature type="chain" id="PRO_0000326627" description="Xaa-Pro aminopeptidase 1">
    <location>
        <begin position="1"/>
        <end position="623"/>
    </location>
</feature>
<feature type="binding site" evidence="1">
    <location>
        <position position="77"/>
    </location>
    <ligand>
        <name>a peptide</name>
        <dbReference type="ChEBI" id="CHEBI:60466"/>
    </ligand>
</feature>
<feature type="binding site" evidence="1">
    <location>
        <position position="395"/>
    </location>
    <ligand>
        <name>a peptide</name>
        <dbReference type="ChEBI" id="CHEBI:60466"/>
    </ligand>
</feature>
<feature type="binding site" evidence="2">
    <location>
        <position position="415"/>
    </location>
    <ligand>
        <name>Mn(2+)</name>
        <dbReference type="ChEBI" id="CHEBI:29035"/>
        <label>1</label>
    </ligand>
</feature>
<feature type="binding site" evidence="2">
    <location>
        <position position="426"/>
    </location>
    <ligand>
        <name>Mn(2+)</name>
        <dbReference type="ChEBI" id="CHEBI:29035"/>
        <label>1</label>
    </ligand>
</feature>
<feature type="binding site" evidence="2">
    <location>
        <position position="426"/>
    </location>
    <ligand>
        <name>Mn(2+)</name>
        <dbReference type="ChEBI" id="CHEBI:29035"/>
        <label>2</label>
    </ligand>
</feature>
<feature type="binding site" evidence="1">
    <location>
        <position position="489"/>
    </location>
    <ligand>
        <name>a peptide</name>
        <dbReference type="ChEBI" id="CHEBI:60466"/>
    </ligand>
</feature>
<feature type="binding site" evidence="2">
    <location>
        <position position="489"/>
    </location>
    <ligand>
        <name>Mn(2+)</name>
        <dbReference type="ChEBI" id="CHEBI:29035"/>
        <label>2</label>
    </ligand>
</feature>
<feature type="binding site" evidence="1">
    <location>
        <position position="498"/>
    </location>
    <ligand>
        <name>a peptide</name>
        <dbReference type="ChEBI" id="CHEBI:60466"/>
    </ligand>
</feature>
<feature type="binding site" evidence="1">
    <location>
        <position position="523"/>
    </location>
    <ligand>
        <name>a peptide</name>
        <dbReference type="ChEBI" id="CHEBI:60466"/>
    </ligand>
</feature>
<feature type="binding site" evidence="2">
    <location>
        <position position="523"/>
    </location>
    <ligand>
        <name>Mn(2+)</name>
        <dbReference type="ChEBI" id="CHEBI:29035"/>
        <label>2</label>
    </ligand>
</feature>
<feature type="binding site" evidence="2">
    <location>
        <position position="537"/>
    </location>
    <ligand>
        <name>Mn(2+)</name>
        <dbReference type="ChEBI" id="CHEBI:29035"/>
        <label>1</label>
    </ligand>
</feature>
<feature type="binding site" evidence="2">
    <location>
        <position position="537"/>
    </location>
    <ligand>
        <name>Mn(2+)</name>
        <dbReference type="ChEBI" id="CHEBI:29035"/>
        <label>2</label>
    </ligand>
</feature>
<feature type="modified residue" description="N6-acetyllysine" evidence="2">
    <location>
        <position position="304"/>
    </location>
</feature>
<evidence type="ECO:0000250" key="1">
    <source>
        <dbReference type="UniProtKB" id="O44750"/>
    </source>
</evidence>
<evidence type="ECO:0000250" key="2">
    <source>
        <dbReference type="UniProtKB" id="Q9NQW7"/>
    </source>
</evidence>
<evidence type="ECO:0000305" key="3"/>
<protein>
    <recommendedName>
        <fullName>Xaa-Pro aminopeptidase 1</fullName>
        <ecNumber evidence="2">3.4.11.9</ecNumber>
    </recommendedName>
    <alternativeName>
        <fullName>Aminoacylproline aminopeptidase</fullName>
    </alternativeName>
    <alternativeName>
        <fullName>Cytosolic aminopeptidase P</fullName>
    </alternativeName>
    <alternativeName>
        <fullName>Soluble aminopeptidase P</fullName>
        <shortName>sAmp</shortName>
    </alternativeName>
    <alternativeName>
        <fullName>X-Pro aminopeptidase 1</fullName>
    </alternativeName>
    <alternativeName>
        <fullName>X-prolyl aminopeptidase 1, soluble</fullName>
    </alternativeName>
</protein>
<organism>
    <name type="scientific">Bos taurus</name>
    <name type="common">Bovine</name>
    <dbReference type="NCBI Taxonomy" id="9913"/>
    <lineage>
        <taxon>Eukaryota</taxon>
        <taxon>Metazoa</taxon>
        <taxon>Chordata</taxon>
        <taxon>Craniata</taxon>
        <taxon>Vertebrata</taxon>
        <taxon>Euteleostomi</taxon>
        <taxon>Mammalia</taxon>
        <taxon>Eutheria</taxon>
        <taxon>Laurasiatheria</taxon>
        <taxon>Artiodactyla</taxon>
        <taxon>Ruminantia</taxon>
        <taxon>Pecora</taxon>
        <taxon>Bovidae</taxon>
        <taxon>Bovinae</taxon>
        <taxon>Bos</taxon>
    </lineage>
</organism>
<accession>Q1JPJ2</accession>
<proteinExistence type="evidence at transcript level"/>
<sequence>MAPKITSELLRQLRQAMRNLEYVTEPIQAYIIPSGDAHQSEYIAPCDCRRAFVSGFDGSAGTAIVTEEHAAMWTDGRYFLQAAKQMDSNWTLMKMGLKDTPTQEDWLVSVLPEGSRVGVDPLIIPTDYWKKMAKVLRSAGHHLIPVKDNLVDKIWTDRPERPCKPLITLGLDYTGISWKDKVADLRLKMAERNVVWFVVTALDEIAWLFNLRGSDVEHNPVFFSYAILGLETIMLFIDGDRIDAPIVKEHLLLDLGLEAEYRIQVLPYKSILSELKILCASLSPREKVWVSDKASYAVSEAIPKDHRCCMPYTPICIAKAVKNSAESEGMRRAHIKDAVALCELFNWLEKEVPKGGVTEISAANKAEEFRRQQADFVDLSFPTISSTGPNGAIIHYAPVPETNRTLSLDEVYLIDSGAQYKDGTTDVTRTMHFGTPTAYEKECFTYVLKGHIAVSAAVFPTGTKGHLLDSFARSALWDSGLDYLHGTGHGVGSFLNVHEGPCGISYKTFSDEPLEAGMIVTDEPGYYEDGAFGIRIENVVLVVPVKTKYNFNNRGSLTFEPLTLVPIQTKMIDVDSLTDKECDWLNSYHLTCRDVIGKELQKQGRQEALEWLIRETQPISKQP</sequence>
<reference key="1">
    <citation type="journal article" date="2005" name="BMC Genomics">
        <title>Characterization of 954 bovine full-CDS cDNA sequences.</title>
        <authorList>
            <person name="Harhay G.P."/>
            <person name="Sonstegard T.S."/>
            <person name="Keele J.W."/>
            <person name="Heaton M.P."/>
            <person name="Clawson M.L."/>
            <person name="Snelling W.M."/>
            <person name="Wiedmann R.T."/>
            <person name="Van Tassell C.P."/>
            <person name="Smith T.P.L."/>
        </authorList>
    </citation>
    <scope>NUCLEOTIDE SEQUENCE [LARGE SCALE MRNA]</scope>
</reference>
<reference key="2">
    <citation type="submission" date="2007-02" db="EMBL/GenBank/DDBJ databases">
        <authorList>
            <consortium name="NIH - Mammalian Gene Collection (MGC) project"/>
        </authorList>
    </citation>
    <scope>NUCLEOTIDE SEQUENCE [LARGE SCALE MRNA]</scope>
    <source>
        <strain>Hereford</strain>
        <tissue>Fetal liver</tissue>
    </source>
</reference>
<gene>
    <name type="primary">XPNPEP1</name>
</gene>